<organism>
    <name type="scientific">Kineococcus radiotolerans (strain ATCC BAA-149 / DSM 14245 / SRS30216)</name>
    <dbReference type="NCBI Taxonomy" id="266940"/>
    <lineage>
        <taxon>Bacteria</taxon>
        <taxon>Bacillati</taxon>
        <taxon>Actinomycetota</taxon>
        <taxon>Actinomycetes</taxon>
        <taxon>Kineosporiales</taxon>
        <taxon>Kineosporiaceae</taxon>
        <taxon>Kineococcus</taxon>
    </lineage>
</organism>
<gene>
    <name evidence="1" type="primary">rplJ</name>
    <name type="ordered locus">Krad_0678</name>
</gene>
<feature type="chain" id="PRO_1000079547" description="Large ribosomal subunit protein uL10">
    <location>
        <begin position="1"/>
        <end position="190"/>
    </location>
</feature>
<feature type="region of interest" description="Disordered" evidence="2">
    <location>
        <begin position="170"/>
        <end position="190"/>
    </location>
</feature>
<evidence type="ECO:0000255" key="1">
    <source>
        <dbReference type="HAMAP-Rule" id="MF_00362"/>
    </source>
</evidence>
<evidence type="ECO:0000256" key="2">
    <source>
        <dbReference type="SAM" id="MobiDB-lite"/>
    </source>
</evidence>
<evidence type="ECO:0000305" key="3"/>
<comment type="function">
    <text evidence="1">Forms part of the ribosomal stalk, playing a central role in the interaction of the ribosome with GTP-bound translation factors.</text>
</comment>
<comment type="subunit">
    <text evidence="1">Part of the ribosomal stalk of the 50S ribosomal subunit. The N-terminus interacts with L11 and the large rRNA to form the base of the stalk. The C-terminus forms an elongated spine to which L12 dimers bind in a sequential fashion forming a multimeric L10(L12)X complex.</text>
</comment>
<comment type="similarity">
    <text evidence="1">Belongs to the universal ribosomal protein uL10 family.</text>
</comment>
<proteinExistence type="inferred from homology"/>
<protein>
    <recommendedName>
        <fullName evidence="1">Large ribosomal subunit protein uL10</fullName>
    </recommendedName>
    <alternativeName>
        <fullName evidence="3">50S ribosomal protein L10</fullName>
    </alternativeName>
</protein>
<dbReference type="EMBL" id="CP000750">
    <property type="protein sequence ID" value="ABS02167.1"/>
    <property type="molecule type" value="Genomic_DNA"/>
</dbReference>
<dbReference type="RefSeq" id="WP_012084991.1">
    <property type="nucleotide sequence ID" value="NC_009664.2"/>
</dbReference>
<dbReference type="SMR" id="A6W5S8"/>
<dbReference type="STRING" id="266940.Krad_0678"/>
<dbReference type="KEGG" id="kra:Krad_0678"/>
<dbReference type="eggNOG" id="COG0244">
    <property type="taxonomic scope" value="Bacteria"/>
</dbReference>
<dbReference type="HOGENOM" id="CLU_092227_1_0_11"/>
<dbReference type="OrthoDB" id="3186107at2"/>
<dbReference type="Proteomes" id="UP000001116">
    <property type="component" value="Chromosome"/>
</dbReference>
<dbReference type="GO" id="GO:0015934">
    <property type="term" value="C:large ribosomal subunit"/>
    <property type="evidence" value="ECO:0007669"/>
    <property type="project" value="InterPro"/>
</dbReference>
<dbReference type="GO" id="GO:0070180">
    <property type="term" value="F:large ribosomal subunit rRNA binding"/>
    <property type="evidence" value="ECO:0007669"/>
    <property type="project" value="UniProtKB-UniRule"/>
</dbReference>
<dbReference type="GO" id="GO:0003735">
    <property type="term" value="F:structural constituent of ribosome"/>
    <property type="evidence" value="ECO:0007669"/>
    <property type="project" value="InterPro"/>
</dbReference>
<dbReference type="GO" id="GO:0006412">
    <property type="term" value="P:translation"/>
    <property type="evidence" value="ECO:0007669"/>
    <property type="project" value="UniProtKB-UniRule"/>
</dbReference>
<dbReference type="CDD" id="cd05797">
    <property type="entry name" value="Ribosomal_L10"/>
    <property type="match status" value="1"/>
</dbReference>
<dbReference type="Gene3D" id="3.30.70.1730">
    <property type="match status" value="1"/>
</dbReference>
<dbReference type="Gene3D" id="6.10.250.290">
    <property type="match status" value="1"/>
</dbReference>
<dbReference type="HAMAP" id="MF_00362">
    <property type="entry name" value="Ribosomal_uL10"/>
    <property type="match status" value="1"/>
</dbReference>
<dbReference type="InterPro" id="IPR001790">
    <property type="entry name" value="Ribosomal_uL10"/>
</dbReference>
<dbReference type="InterPro" id="IPR043141">
    <property type="entry name" value="Ribosomal_uL10-like_sf"/>
</dbReference>
<dbReference type="InterPro" id="IPR022973">
    <property type="entry name" value="Ribosomal_uL10_bac"/>
</dbReference>
<dbReference type="InterPro" id="IPR047865">
    <property type="entry name" value="Ribosomal_uL10_bac_type"/>
</dbReference>
<dbReference type="InterPro" id="IPR002363">
    <property type="entry name" value="Ribosomal_uL10_CS_bac"/>
</dbReference>
<dbReference type="NCBIfam" id="NF000955">
    <property type="entry name" value="PRK00099.1-1"/>
    <property type="match status" value="1"/>
</dbReference>
<dbReference type="PANTHER" id="PTHR11560">
    <property type="entry name" value="39S RIBOSOMAL PROTEIN L10, MITOCHONDRIAL"/>
    <property type="match status" value="1"/>
</dbReference>
<dbReference type="Pfam" id="PF00466">
    <property type="entry name" value="Ribosomal_L10"/>
    <property type="match status" value="1"/>
</dbReference>
<dbReference type="SUPFAM" id="SSF160369">
    <property type="entry name" value="Ribosomal protein L10-like"/>
    <property type="match status" value="1"/>
</dbReference>
<dbReference type="PROSITE" id="PS01109">
    <property type="entry name" value="RIBOSOMAL_L10"/>
    <property type="match status" value="1"/>
</dbReference>
<sequence length="190" mass="19612">MPKPRNIAAVKQLTALFQESNAAVLTEYRGLSVAQLTQLRTALGPDTTYAVLKNTLTTIAAKEAGVTAFEGQLSGPSAIAFITGDPVEAAKGLRDFAKTNPQLIVKSGMLEGRAISAADVTALADLESREVLLSKVAGVLKATQSKAAALFQAPLSKTVRTVEALREKQAAGAPAEAAPVEAPAAETVDA</sequence>
<name>RL10_KINRD</name>
<reference key="1">
    <citation type="journal article" date="2008" name="PLoS ONE">
        <title>Survival in nuclear waste, extreme resistance, and potential applications gleaned from the genome sequence of Kineococcus radiotolerans SRS30216.</title>
        <authorList>
            <person name="Bagwell C.E."/>
            <person name="Bhat S."/>
            <person name="Hawkins G.M."/>
            <person name="Smith B.W."/>
            <person name="Biswas T."/>
            <person name="Hoover T.R."/>
            <person name="Saunders E."/>
            <person name="Han C.S."/>
            <person name="Tsodikov O.V."/>
            <person name="Shimkets L.J."/>
        </authorList>
    </citation>
    <scope>NUCLEOTIDE SEQUENCE [LARGE SCALE GENOMIC DNA]</scope>
    <source>
        <strain>ATCC BAA-149 / DSM 14245 / SRS30216</strain>
    </source>
</reference>
<accession>A6W5S8</accession>
<keyword id="KW-1185">Reference proteome</keyword>
<keyword id="KW-0687">Ribonucleoprotein</keyword>
<keyword id="KW-0689">Ribosomal protein</keyword>
<keyword id="KW-0694">RNA-binding</keyword>
<keyword id="KW-0699">rRNA-binding</keyword>